<accession>Q4WMU5</accession>
<dbReference type="EC" id="5.2.1.8"/>
<dbReference type="EMBL" id="AAHF01000006">
    <property type="protein sequence ID" value="EAL88719.1"/>
    <property type="status" value="ALT_SEQ"/>
    <property type="molecule type" value="Genomic_DNA"/>
</dbReference>
<dbReference type="RefSeq" id="XP_750757.1">
    <property type="nucleotide sequence ID" value="XM_745664.1"/>
</dbReference>
<dbReference type="SMR" id="Q4WMU5"/>
<dbReference type="FunCoup" id="Q4WMU5">
    <property type="interactions" value="99"/>
</dbReference>
<dbReference type="STRING" id="330879.Q4WMU5"/>
<dbReference type="GeneID" id="3508044"/>
<dbReference type="KEGG" id="afm:AFUA_6G08680"/>
<dbReference type="eggNOG" id="KOG2867">
    <property type="taxonomic scope" value="Eukaryota"/>
</dbReference>
<dbReference type="HOGENOM" id="CLU_030733_2_0_1"/>
<dbReference type="InParanoid" id="Q4WMU5"/>
<dbReference type="OrthoDB" id="16120at2759"/>
<dbReference type="Proteomes" id="UP000002530">
    <property type="component" value="Chromosome 6"/>
</dbReference>
<dbReference type="GO" id="GO:0005737">
    <property type="term" value="C:cytoplasm"/>
    <property type="evidence" value="ECO:0000318"/>
    <property type="project" value="GO_Central"/>
</dbReference>
<dbReference type="GO" id="GO:0005634">
    <property type="term" value="C:nucleus"/>
    <property type="evidence" value="ECO:0000318"/>
    <property type="project" value="GO_Central"/>
</dbReference>
<dbReference type="GO" id="GO:0000159">
    <property type="term" value="C:protein phosphatase type 2A complex"/>
    <property type="evidence" value="ECO:0000318"/>
    <property type="project" value="GO_Central"/>
</dbReference>
<dbReference type="GO" id="GO:0003755">
    <property type="term" value="F:peptidyl-prolyl cis-trans isomerase activity"/>
    <property type="evidence" value="ECO:0000318"/>
    <property type="project" value="GO_Central"/>
</dbReference>
<dbReference type="GO" id="GO:0008160">
    <property type="term" value="F:protein tyrosine phosphatase activator activity"/>
    <property type="evidence" value="ECO:0000318"/>
    <property type="project" value="GO_Central"/>
</dbReference>
<dbReference type="GO" id="GO:0007052">
    <property type="term" value="P:mitotic spindle organization"/>
    <property type="evidence" value="ECO:0000318"/>
    <property type="project" value="GO_Central"/>
</dbReference>
<dbReference type="CDD" id="cd04087">
    <property type="entry name" value="PTPA"/>
    <property type="match status" value="1"/>
</dbReference>
<dbReference type="FunFam" id="1.20.120.1150:FF:000003">
    <property type="entry name" value="Serine/threonine-protein phosphatase 2A activator"/>
    <property type="match status" value="1"/>
</dbReference>
<dbReference type="Gene3D" id="1.20.120.1150">
    <property type="match status" value="1"/>
</dbReference>
<dbReference type="InterPro" id="IPR004327">
    <property type="entry name" value="Phstyr_phstse_ac"/>
</dbReference>
<dbReference type="InterPro" id="IPR043170">
    <property type="entry name" value="PTPA_C_lid"/>
</dbReference>
<dbReference type="InterPro" id="IPR037218">
    <property type="entry name" value="PTPA_sf"/>
</dbReference>
<dbReference type="PANTHER" id="PTHR10012">
    <property type="entry name" value="SERINE/THREONINE-PROTEIN PHOSPHATASE 2A REGULATORY SUBUNIT B"/>
    <property type="match status" value="1"/>
</dbReference>
<dbReference type="PANTHER" id="PTHR10012:SF3">
    <property type="entry name" value="SERINE_THREONINE-PROTEIN PHOSPHATASE 2A ACTIVATOR 1"/>
    <property type="match status" value="1"/>
</dbReference>
<dbReference type="Pfam" id="PF03095">
    <property type="entry name" value="PTPA"/>
    <property type="match status" value="1"/>
</dbReference>
<dbReference type="SUPFAM" id="SSF140984">
    <property type="entry name" value="PTPA-like"/>
    <property type="match status" value="1"/>
</dbReference>
<organism>
    <name type="scientific">Aspergillus fumigatus (strain ATCC MYA-4609 / CBS 101355 / FGSC A1100 / Af293)</name>
    <name type="common">Neosartorya fumigata</name>
    <dbReference type="NCBI Taxonomy" id="330879"/>
    <lineage>
        <taxon>Eukaryota</taxon>
        <taxon>Fungi</taxon>
        <taxon>Dikarya</taxon>
        <taxon>Ascomycota</taxon>
        <taxon>Pezizomycotina</taxon>
        <taxon>Eurotiomycetes</taxon>
        <taxon>Eurotiomycetidae</taxon>
        <taxon>Eurotiales</taxon>
        <taxon>Aspergillaceae</taxon>
        <taxon>Aspergillus</taxon>
        <taxon>Aspergillus subgen. Fumigati</taxon>
    </lineage>
</organism>
<comment type="function">
    <text evidence="1">PPIases accelerate the folding of proteins. It catalyzes the cis-trans isomerization of proline imidic peptide bonds in oligopeptides. Acts as a regulatory subunit for PP2A-like phosphatases modulating their activity or substrate specificity, probably by inducing a conformational change in the catalytic subunit, a direct target of the PPIase. Can reactivate inactive phosphatase PP2A-phosphatase methylesterase complexes (PP2Ai) in presence of ATP and Mg(2+) by dissociating the inactive form from the complex (By similarity).</text>
</comment>
<comment type="catalytic activity">
    <reaction>
        <text>[protein]-peptidylproline (omega=180) = [protein]-peptidylproline (omega=0)</text>
        <dbReference type="Rhea" id="RHEA:16237"/>
        <dbReference type="Rhea" id="RHEA-COMP:10747"/>
        <dbReference type="Rhea" id="RHEA-COMP:10748"/>
        <dbReference type="ChEBI" id="CHEBI:83833"/>
        <dbReference type="ChEBI" id="CHEBI:83834"/>
        <dbReference type="EC" id="5.2.1.8"/>
    </reaction>
</comment>
<comment type="subcellular location">
    <subcellularLocation>
        <location evidence="1">Cytoplasm</location>
    </subcellularLocation>
    <subcellularLocation>
        <location evidence="1">Nucleus</location>
    </subcellularLocation>
</comment>
<comment type="similarity">
    <text evidence="3">Belongs to the PTPA-type PPIase family.</text>
</comment>
<comment type="sequence caution" evidence="3">
    <conflict type="erroneous gene model prediction">
        <sequence resource="EMBL-CDS" id="EAL88719"/>
    </conflict>
</comment>
<feature type="chain" id="PRO_0000226093" description="Serine/threonine-protein phosphatase 2A activator 1">
    <location>
        <begin position="1"/>
        <end position="473"/>
    </location>
</feature>
<feature type="region of interest" description="Disordered" evidence="2">
    <location>
        <begin position="360"/>
        <end position="473"/>
    </location>
</feature>
<feature type="compositionally biased region" description="Polar residues" evidence="2">
    <location>
        <begin position="368"/>
        <end position="378"/>
    </location>
</feature>
<feature type="compositionally biased region" description="Low complexity" evidence="2">
    <location>
        <begin position="395"/>
        <end position="416"/>
    </location>
</feature>
<gene>
    <name type="primary">rrd1</name>
    <name type="ORF">AFUA_6G08680</name>
</gene>
<evidence type="ECO:0000250" key="1"/>
<evidence type="ECO:0000256" key="2">
    <source>
        <dbReference type="SAM" id="MobiDB-lite"/>
    </source>
</evidence>
<evidence type="ECO:0000305" key="3"/>
<sequence length="473" mass="51135">MANSFPLRVLPTIDPSAGHTFITPSKRIHESEDVSEFLISKAYVDIMTFLLQLNRAMIPVKLADGTVQSWPINTDAVEFSAPVRQLQQLLTKLEELLAEAPPDTGPRRFGNISFRRWYELVESRASELLGECLPSELLQAKSSDPNSVTAEAELKAYFLGSWGSPQRLDYGTGHELSFLAFLAGIWKLNGFPKTTPGVEERAIVLGVIQPYLELVRTIIKRYTLEPAGSHGVWGLDDHSFIPYILGSAQLAPAISETDPTPEEGSLPGAPSPNGVTKAHIVERERLTNMYFSAIGFIYDVKKGPFWEHSPMLYDISGIQAGWGKINKGMIKMYNAEVLSKFPVVQHFPFGSLFSWDRDPNAVPPPTSAHMSTTQSQSRGPAVPSAGQTPPSGTRAPWATATQAAPPAGAGTAAPWAAKRDGCTPGKPPTSLPDTSRLPPGPMAPTRAPWAASSTGQAPGGDPTHVPTKAPWAK</sequence>
<name>PTPA1_ASPFU</name>
<proteinExistence type="inferred from homology"/>
<reference key="1">
    <citation type="journal article" date="2005" name="Nature">
        <title>Genomic sequence of the pathogenic and allergenic filamentous fungus Aspergillus fumigatus.</title>
        <authorList>
            <person name="Nierman W.C."/>
            <person name="Pain A."/>
            <person name="Anderson M.J."/>
            <person name="Wortman J.R."/>
            <person name="Kim H.S."/>
            <person name="Arroyo J."/>
            <person name="Berriman M."/>
            <person name="Abe K."/>
            <person name="Archer D.B."/>
            <person name="Bermejo C."/>
            <person name="Bennett J.W."/>
            <person name="Bowyer P."/>
            <person name="Chen D."/>
            <person name="Collins M."/>
            <person name="Coulsen R."/>
            <person name="Davies R."/>
            <person name="Dyer P.S."/>
            <person name="Farman M.L."/>
            <person name="Fedorova N."/>
            <person name="Fedorova N.D."/>
            <person name="Feldblyum T.V."/>
            <person name="Fischer R."/>
            <person name="Fosker N."/>
            <person name="Fraser A."/>
            <person name="Garcia J.L."/>
            <person name="Garcia M.J."/>
            <person name="Goble A."/>
            <person name="Goldman G.H."/>
            <person name="Gomi K."/>
            <person name="Griffith-Jones S."/>
            <person name="Gwilliam R."/>
            <person name="Haas B.J."/>
            <person name="Haas H."/>
            <person name="Harris D.E."/>
            <person name="Horiuchi H."/>
            <person name="Huang J."/>
            <person name="Humphray S."/>
            <person name="Jimenez J."/>
            <person name="Keller N."/>
            <person name="Khouri H."/>
            <person name="Kitamoto K."/>
            <person name="Kobayashi T."/>
            <person name="Konzack S."/>
            <person name="Kulkarni R."/>
            <person name="Kumagai T."/>
            <person name="Lafton A."/>
            <person name="Latge J.-P."/>
            <person name="Li W."/>
            <person name="Lord A."/>
            <person name="Lu C."/>
            <person name="Majoros W.H."/>
            <person name="May G.S."/>
            <person name="Miller B.L."/>
            <person name="Mohamoud Y."/>
            <person name="Molina M."/>
            <person name="Monod M."/>
            <person name="Mouyna I."/>
            <person name="Mulligan S."/>
            <person name="Murphy L.D."/>
            <person name="O'Neil S."/>
            <person name="Paulsen I."/>
            <person name="Penalva M.A."/>
            <person name="Pertea M."/>
            <person name="Price C."/>
            <person name="Pritchard B.L."/>
            <person name="Quail M.A."/>
            <person name="Rabbinowitsch E."/>
            <person name="Rawlins N."/>
            <person name="Rajandream M.A."/>
            <person name="Reichard U."/>
            <person name="Renauld H."/>
            <person name="Robson G.D."/>
            <person name="Rodriguez de Cordoba S."/>
            <person name="Rodriguez-Pena J.M."/>
            <person name="Ronning C.M."/>
            <person name="Rutter S."/>
            <person name="Salzberg S.L."/>
            <person name="Sanchez M."/>
            <person name="Sanchez-Ferrero J.C."/>
            <person name="Saunders D."/>
            <person name="Seeger K."/>
            <person name="Squares R."/>
            <person name="Squares S."/>
            <person name="Takeuchi M."/>
            <person name="Tekaia F."/>
            <person name="Turner G."/>
            <person name="Vazquez de Aldana C.R."/>
            <person name="Weidman J."/>
            <person name="White O."/>
            <person name="Woodward J.R."/>
            <person name="Yu J.-H."/>
            <person name="Fraser C.M."/>
            <person name="Galagan J.E."/>
            <person name="Asai K."/>
            <person name="Machida M."/>
            <person name="Hall N."/>
            <person name="Barrell B.G."/>
            <person name="Denning D.W."/>
        </authorList>
    </citation>
    <scope>NUCLEOTIDE SEQUENCE [LARGE SCALE GENOMIC DNA]</scope>
    <source>
        <strain>ATCC MYA-4609 / CBS 101355 / FGSC A1100 / Af293</strain>
    </source>
</reference>
<protein>
    <recommendedName>
        <fullName>Serine/threonine-protein phosphatase 2A activator 1</fullName>
        <ecNumber>5.2.1.8</ecNumber>
    </recommendedName>
    <alternativeName>
        <fullName>Peptidyl-prolyl cis-trans isomerase PTPA-1</fullName>
        <shortName>PPIase PTPA-1</shortName>
        <shortName>Rotamase PTPA-1</shortName>
    </alternativeName>
    <alternativeName>
        <fullName>Phosphotyrosyl phosphatase activator 1</fullName>
    </alternativeName>
</protein>
<keyword id="KW-0963">Cytoplasm</keyword>
<keyword id="KW-0413">Isomerase</keyword>
<keyword id="KW-0539">Nucleus</keyword>
<keyword id="KW-1185">Reference proteome</keyword>
<keyword id="KW-0697">Rotamase</keyword>